<keyword id="KW-1003">Cell membrane</keyword>
<keyword id="KW-0472">Membrane</keyword>
<keyword id="KW-0812">Transmembrane</keyword>
<keyword id="KW-1133">Transmembrane helix</keyword>
<organism>
    <name type="scientific">Geobacillus thermodenitrificans (strain NG80-2)</name>
    <dbReference type="NCBI Taxonomy" id="420246"/>
    <lineage>
        <taxon>Bacteria</taxon>
        <taxon>Bacillati</taxon>
        <taxon>Bacillota</taxon>
        <taxon>Bacilli</taxon>
        <taxon>Bacillales</taxon>
        <taxon>Anoxybacillaceae</taxon>
        <taxon>Geobacillus</taxon>
    </lineage>
</organism>
<feature type="chain" id="PRO_1000068719" description="UPF0344 protein GTNG_0604">
    <location>
        <begin position="1"/>
        <end position="117"/>
    </location>
</feature>
<feature type="transmembrane region" description="Helical" evidence="1">
    <location>
        <begin position="1"/>
        <end position="21"/>
    </location>
</feature>
<feature type="transmembrane region" description="Helical" evidence="1">
    <location>
        <begin position="39"/>
        <end position="59"/>
    </location>
</feature>
<feature type="transmembrane region" description="Helical" evidence="1">
    <location>
        <begin position="61"/>
        <end position="81"/>
    </location>
</feature>
<feature type="transmembrane region" description="Helical" evidence="1">
    <location>
        <begin position="97"/>
        <end position="117"/>
    </location>
</feature>
<protein>
    <recommendedName>
        <fullName evidence="1">UPF0344 protein GTNG_0604</fullName>
    </recommendedName>
</protein>
<proteinExistence type="inferred from homology"/>
<sequence>MTHAHITSWFIMIILFLIAVSMQRSGAAKANIIKMVLRLFYIITIITGLLLLHSIASISGLYWLKALAGLWVIGAMEMVLVAGKKGKSMAAGWTQWVIALVVTLFLGLLLPLGFDLF</sequence>
<evidence type="ECO:0000255" key="1">
    <source>
        <dbReference type="HAMAP-Rule" id="MF_01536"/>
    </source>
</evidence>
<name>Y604_GEOTN</name>
<dbReference type="EMBL" id="CP000557">
    <property type="protein sequence ID" value="ABO65986.1"/>
    <property type="molecule type" value="Genomic_DNA"/>
</dbReference>
<dbReference type="RefSeq" id="WP_008879076.1">
    <property type="nucleotide sequence ID" value="NC_009328.1"/>
</dbReference>
<dbReference type="GeneID" id="87621766"/>
<dbReference type="KEGG" id="gtn:GTNG_0604"/>
<dbReference type="eggNOG" id="ENOG5032W2Q">
    <property type="taxonomic scope" value="Bacteria"/>
</dbReference>
<dbReference type="HOGENOM" id="CLU_146641_1_1_9"/>
<dbReference type="Proteomes" id="UP000001578">
    <property type="component" value="Chromosome"/>
</dbReference>
<dbReference type="GO" id="GO:0005886">
    <property type="term" value="C:plasma membrane"/>
    <property type="evidence" value="ECO:0007669"/>
    <property type="project" value="UniProtKB-SubCell"/>
</dbReference>
<dbReference type="HAMAP" id="MF_01536">
    <property type="entry name" value="UPF0344"/>
    <property type="match status" value="1"/>
</dbReference>
<dbReference type="InterPro" id="IPR010899">
    <property type="entry name" value="UPF0344"/>
</dbReference>
<dbReference type="NCBIfam" id="NF010196">
    <property type="entry name" value="PRK13673.1-3"/>
    <property type="match status" value="1"/>
</dbReference>
<dbReference type="Pfam" id="PF07457">
    <property type="entry name" value="DUF1516"/>
    <property type="match status" value="1"/>
</dbReference>
<gene>
    <name type="ordered locus">GTNG_0604</name>
</gene>
<reference key="1">
    <citation type="journal article" date="2007" name="Proc. Natl. Acad. Sci. U.S.A.">
        <title>Genome and proteome of long-chain alkane degrading Geobacillus thermodenitrificans NG80-2 isolated from a deep-subsurface oil reservoir.</title>
        <authorList>
            <person name="Feng L."/>
            <person name="Wang W."/>
            <person name="Cheng J."/>
            <person name="Ren Y."/>
            <person name="Zhao G."/>
            <person name="Gao C."/>
            <person name="Tang Y."/>
            <person name="Liu X."/>
            <person name="Han W."/>
            <person name="Peng X."/>
            <person name="Liu R."/>
            <person name="Wang L."/>
        </authorList>
    </citation>
    <scope>NUCLEOTIDE SEQUENCE [LARGE SCALE GENOMIC DNA]</scope>
    <source>
        <strain>NG80-2</strain>
    </source>
</reference>
<accession>A4IKY2</accession>
<comment type="subcellular location">
    <subcellularLocation>
        <location evidence="1">Cell membrane</location>
        <topology evidence="1">Multi-pass membrane protein</topology>
    </subcellularLocation>
</comment>
<comment type="similarity">
    <text evidence="1">Belongs to the UPF0344 family.</text>
</comment>